<proteinExistence type="inferred from homology"/>
<sequence length="492" mass="54163">MKIEMKNISKSFGTNKVLEAIDLPINSGEVHALMGENGAGKSTLMNILTGLFPASGGEIEIDKEDKTFKNPQEAEGFGISFIHQEMNTWPDLTVLENLFLGREIKNKFGVLDTKAMRKKATFAFEQLGVTIDLDKEIGNLSVGQQQMVEIAKSFLSDLKILIMDEPTAALTERETERLFSVIAGLKAQGVGIIYISHRMEEIFKITDCVTVMRDGLVIDTKKTKETNVDELVRKMVGRSITDYYPQKNAEIREIVFEAENLSTADFKNISFSVRSGEILGFAGLMGAGRTEVMRAIFGIDKLKSGTIKINGKSLTINNPAQAIKAGIGFLTEDRKDEGLVLDFSIKDNITLPSTKDFIHHGLFDDKTATTFVKQLSERLNVKATDEEQMVGSLSGGNQQKVVLAKWIGIAPKVLILDEPTRGVDVGAKREIYQLMNELAERGVPIIMISSDLPEILGVADRIAVMHEGKIAGFLNKKEATQENVMQLATGGK</sequence>
<organism>
    <name type="scientific">Lactococcus lactis subsp. cremoris (strain SK11)</name>
    <dbReference type="NCBI Taxonomy" id="272622"/>
    <lineage>
        <taxon>Bacteria</taxon>
        <taxon>Bacillati</taxon>
        <taxon>Bacillota</taxon>
        <taxon>Bacilli</taxon>
        <taxon>Lactobacillales</taxon>
        <taxon>Streptococcaceae</taxon>
        <taxon>Lactococcus</taxon>
        <taxon>Lactococcus cremoris subsp. cremoris</taxon>
    </lineage>
</organism>
<dbReference type="EC" id="7.5.2.7" evidence="1"/>
<dbReference type="EMBL" id="CP000425">
    <property type="protein sequence ID" value="ABJ73293.1"/>
    <property type="molecule type" value="Genomic_DNA"/>
</dbReference>
<dbReference type="RefSeq" id="WP_011676541.1">
    <property type="nucleotide sequence ID" value="NC_008527.1"/>
</dbReference>
<dbReference type="SMR" id="Q02XM9"/>
<dbReference type="KEGG" id="llc:LACR_1800"/>
<dbReference type="HOGENOM" id="CLU_000604_92_3_9"/>
<dbReference type="Proteomes" id="UP000000240">
    <property type="component" value="Chromosome"/>
</dbReference>
<dbReference type="GO" id="GO:0005886">
    <property type="term" value="C:plasma membrane"/>
    <property type="evidence" value="ECO:0007669"/>
    <property type="project" value="UniProtKB-SubCell"/>
</dbReference>
<dbReference type="GO" id="GO:0015611">
    <property type="term" value="F:ABC-type D-ribose transporter activity"/>
    <property type="evidence" value="ECO:0007669"/>
    <property type="project" value="UniProtKB-EC"/>
</dbReference>
<dbReference type="GO" id="GO:0005524">
    <property type="term" value="F:ATP binding"/>
    <property type="evidence" value="ECO:0007669"/>
    <property type="project" value="UniProtKB-KW"/>
</dbReference>
<dbReference type="GO" id="GO:0016887">
    <property type="term" value="F:ATP hydrolysis activity"/>
    <property type="evidence" value="ECO:0007669"/>
    <property type="project" value="InterPro"/>
</dbReference>
<dbReference type="CDD" id="cd03216">
    <property type="entry name" value="ABC_Carb_Monos_I"/>
    <property type="match status" value="1"/>
</dbReference>
<dbReference type="CDD" id="cd03215">
    <property type="entry name" value="ABC_Carb_Monos_II"/>
    <property type="match status" value="1"/>
</dbReference>
<dbReference type="FunFam" id="3.40.50.300:FF:000126">
    <property type="entry name" value="Galactose/methyl galactoside import ATP-binding protein MglA"/>
    <property type="match status" value="1"/>
</dbReference>
<dbReference type="FunFam" id="3.40.50.300:FF:000127">
    <property type="entry name" value="Ribose import ATP-binding protein RbsA"/>
    <property type="match status" value="1"/>
</dbReference>
<dbReference type="Gene3D" id="3.40.50.300">
    <property type="entry name" value="P-loop containing nucleotide triphosphate hydrolases"/>
    <property type="match status" value="2"/>
</dbReference>
<dbReference type="InterPro" id="IPR003593">
    <property type="entry name" value="AAA+_ATPase"/>
</dbReference>
<dbReference type="InterPro" id="IPR050107">
    <property type="entry name" value="ABC_carbohydrate_import_ATPase"/>
</dbReference>
<dbReference type="InterPro" id="IPR003439">
    <property type="entry name" value="ABC_transporter-like_ATP-bd"/>
</dbReference>
<dbReference type="InterPro" id="IPR017871">
    <property type="entry name" value="ABC_transporter-like_CS"/>
</dbReference>
<dbReference type="InterPro" id="IPR027417">
    <property type="entry name" value="P-loop_NTPase"/>
</dbReference>
<dbReference type="PANTHER" id="PTHR43790">
    <property type="entry name" value="CARBOHYDRATE TRANSPORT ATP-BINDING PROTEIN MG119-RELATED"/>
    <property type="match status" value="1"/>
</dbReference>
<dbReference type="PANTHER" id="PTHR43790:SF3">
    <property type="entry name" value="D-ALLOSE IMPORT ATP-BINDING PROTEIN ALSA-RELATED"/>
    <property type="match status" value="1"/>
</dbReference>
<dbReference type="Pfam" id="PF00005">
    <property type="entry name" value="ABC_tran"/>
    <property type="match status" value="2"/>
</dbReference>
<dbReference type="SMART" id="SM00382">
    <property type="entry name" value="AAA"/>
    <property type="match status" value="2"/>
</dbReference>
<dbReference type="SUPFAM" id="SSF52540">
    <property type="entry name" value="P-loop containing nucleoside triphosphate hydrolases"/>
    <property type="match status" value="2"/>
</dbReference>
<dbReference type="PROSITE" id="PS00211">
    <property type="entry name" value="ABC_TRANSPORTER_1"/>
    <property type="match status" value="2"/>
</dbReference>
<dbReference type="PROSITE" id="PS50893">
    <property type="entry name" value="ABC_TRANSPORTER_2"/>
    <property type="match status" value="2"/>
</dbReference>
<dbReference type="PROSITE" id="PS51254">
    <property type="entry name" value="RBSA"/>
    <property type="match status" value="1"/>
</dbReference>
<reference key="1">
    <citation type="journal article" date="2006" name="Proc. Natl. Acad. Sci. U.S.A.">
        <title>Comparative genomics of the lactic acid bacteria.</title>
        <authorList>
            <person name="Makarova K.S."/>
            <person name="Slesarev A."/>
            <person name="Wolf Y.I."/>
            <person name="Sorokin A."/>
            <person name="Mirkin B."/>
            <person name="Koonin E.V."/>
            <person name="Pavlov A."/>
            <person name="Pavlova N."/>
            <person name="Karamychev V."/>
            <person name="Polouchine N."/>
            <person name="Shakhova V."/>
            <person name="Grigoriev I."/>
            <person name="Lou Y."/>
            <person name="Rohksar D."/>
            <person name="Lucas S."/>
            <person name="Huang K."/>
            <person name="Goodstein D.M."/>
            <person name="Hawkins T."/>
            <person name="Plengvidhya V."/>
            <person name="Welker D."/>
            <person name="Hughes J."/>
            <person name="Goh Y."/>
            <person name="Benson A."/>
            <person name="Baldwin K."/>
            <person name="Lee J.-H."/>
            <person name="Diaz-Muniz I."/>
            <person name="Dosti B."/>
            <person name="Smeianov V."/>
            <person name="Wechter W."/>
            <person name="Barabote R."/>
            <person name="Lorca G."/>
            <person name="Altermann E."/>
            <person name="Barrangou R."/>
            <person name="Ganesan B."/>
            <person name="Xie Y."/>
            <person name="Rawsthorne H."/>
            <person name="Tamir D."/>
            <person name="Parker C."/>
            <person name="Breidt F."/>
            <person name="Broadbent J.R."/>
            <person name="Hutkins R."/>
            <person name="O'Sullivan D."/>
            <person name="Steele J."/>
            <person name="Unlu G."/>
            <person name="Saier M.H. Jr."/>
            <person name="Klaenhammer T."/>
            <person name="Richardson P."/>
            <person name="Kozyavkin S."/>
            <person name="Weimer B.C."/>
            <person name="Mills D.A."/>
        </authorList>
    </citation>
    <scope>NUCLEOTIDE SEQUENCE [LARGE SCALE GENOMIC DNA]</scope>
    <source>
        <strain>SK11</strain>
    </source>
</reference>
<keyword id="KW-0067">ATP-binding</keyword>
<keyword id="KW-1003">Cell membrane</keyword>
<keyword id="KW-0472">Membrane</keyword>
<keyword id="KW-0547">Nucleotide-binding</keyword>
<keyword id="KW-0677">Repeat</keyword>
<keyword id="KW-0762">Sugar transport</keyword>
<keyword id="KW-1278">Translocase</keyword>
<keyword id="KW-0813">Transport</keyword>
<gene>
    <name evidence="1" type="primary">rbsA</name>
    <name type="ordered locus">LACR_1800</name>
</gene>
<evidence type="ECO:0000255" key="1">
    <source>
        <dbReference type="HAMAP-Rule" id="MF_01716"/>
    </source>
</evidence>
<name>RBSA_LACLS</name>
<comment type="function">
    <text evidence="1">Part of the ABC transporter complex RbsABC involved in ribose import. Responsible for energy coupling to the transport system.</text>
</comment>
<comment type="catalytic activity">
    <reaction evidence="1">
        <text>D-ribose(out) + ATP + H2O = D-ribose(in) + ADP + phosphate + H(+)</text>
        <dbReference type="Rhea" id="RHEA:29903"/>
        <dbReference type="ChEBI" id="CHEBI:15377"/>
        <dbReference type="ChEBI" id="CHEBI:15378"/>
        <dbReference type="ChEBI" id="CHEBI:30616"/>
        <dbReference type="ChEBI" id="CHEBI:43474"/>
        <dbReference type="ChEBI" id="CHEBI:47013"/>
        <dbReference type="ChEBI" id="CHEBI:456216"/>
        <dbReference type="EC" id="7.5.2.7"/>
    </reaction>
</comment>
<comment type="subunit">
    <text evidence="1">The complex is composed of an ATP-binding protein (RbsA), two transmembrane proteins (RbsC) and a solute-binding protein (RbsB).</text>
</comment>
<comment type="subcellular location">
    <subcellularLocation>
        <location evidence="1">Cell membrane</location>
        <topology evidence="1">Peripheral membrane protein</topology>
    </subcellularLocation>
</comment>
<comment type="similarity">
    <text evidence="1">Belongs to the ABC transporter superfamily. Ribose importer (TC 3.A.1.2.1) family.</text>
</comment>
<protein>
    <recommendedName>
        <fullName evidence="1">Ribose import ATP-binding protein RbsA</fullName>
        <ecNumber evidence="1">7.5.2.7</ecNumber>
    </recommendedName>
</protein>
<feature type="chain" id="PRO_0000277516" description="Ribose import ATP-binding protein RbsA">
    <location>
        <begin position="1"/>
        <end position="492"/>
    </location>
</feature>
<feature type="domain" description="ABC transporter 1" evidence="1">
    <location>
        <begin position="3"/>
        <end position="239"/>
    </location>
</feature>
<feature type="domain" description="ABC transporter 2" evidence="1">
    <location>
        <begin position="249"/>
        <end position="492"/>
    </location>
</feature>
<feature type="binding site" evidence="1">
    <location>
        <begin position="35"/>
        <end position="42"/>
    </location>
    <ligand>
        <name>ATP</name>
        <dbReference type="ChEBI" id="CHEBI:30616"/>
    </ligand>
</feature>
<accession>Q02XM9</accession>